<evidence type="ECO:0000255" key="1">
    <source>
        <dbReference type="HAMAP-Rule" id="MF_00074"/>
    </source>
</evidence>
<gene>
    <name evidence="1" type="primary">rsmG</name>
    <name type="ordered locus">Maqu_3885</name>
</gene>
<accession>A1U7I4</accession>
<dbReference type="EC" id="2.1.1.170" evidence="1"/>
<dbReference type="EMBL" id="CP000514">
    <property type="protein sequence ID" value="ABM20953.1"/>
    <property type="molecule type" value="Genomic_DNA"/>
</dbReference>
<dbReference type="RefSeq" id="WP_011787286.1">
    <property type="nucleotide sequence ID" value="NC_008740.1"/>
</dbReference>
<dbReference type="SMR" id="A1U7I4"/>
<dbReference type="STRING" id="351348.Maqu_3885"/>
<dbReference type="KEGG" id="maq:Maqu_3885"/>
<dbReference type="eggNOG" id="COG0357">
    <property type="taxonomic scope" value="Bacteria"/>
</dbReference>
<dbReference type="HOGENOM" id="CLU_065341_2_0_6"/>
<dbReference type="OrthoDB" id="9808773at2"/>
<dbReference type="Proteomes" id="UP000000998">
    <property type="component" value="Chromosome"/>
</dbReference>
<dbReference type="GO" id="GO:0005829">
    <property type="term" value="C:cytosol"/>
    <property type="evidence" value="ECO:0007669"/>
    <property type="project" value="TreeGrafter"/>
</dbReference>
<dbReference type="GO" id="GO:0070043">
    <property type="term" value="F:rRNA (guanine-N7-)-methyltransferase activity"/>
    <property type="evidence" value="ECO:0007669"/>
    <property type="project" value="UniProtKB-UniRule"/>
</dbReference>
<dbReference type="CDD" id="cd02440">
    <property type="entry name" value="AdoMet_MTases"/>
    <property type="match status" value="1"/>
</dbReference>
<dbReference type="Gene3D" id="3.40.50.150">
    <property type="entry name" value="Vaccinia Virus protein VP39"/>
    <property type="match status" value="1"/>
</dbReference>
<dbReference type="HAMAP" id="MF_00074">
    <property type="entry name" value="16SrRNA_methyltr_G"/>
    <property type="match status" value="1"/>
</dbReference>
<dbReference type="InterPro" id="IPR003682">
    <property type="entry name" value="rRNA_ssu_MeTfrase_G"/>
</dbReference>
<dbReference type="InterPro" id="IPR029063">
    <property type="entry name" value="SAM-dependent_MTases_sf"/>
</dbReference>
<dbReference type="NCBIfam" id="TIGR00138">
    <property type="entry name" value="rsmG_gidB"/>
    <property type="match status" value="1"/>
</dbReference>
<dbReference type="PANTHER" id="PTHR31760">
    <property type="entry name" value="S-ADENOSYL-L-METHIONINE-DEPENDENT METHYLTRANSFERASES SUPERFAMILY PROTEIN"/>
    <property type="match status" value="1"/>
</dbReference>
<dbReference type="PANTHER" id="PTHR31760:SF0">
    <property type="entry name" value="S-ADENOSYL-L-METHIONINE-DEPENDENT METHYLTRANSFERASES SUPERFAMILY PROTEIN"/>
    <property type="match status" value="1"/>
</dbReference>
<dbReference type="Pfam" id="PF02527">
    <property type="entry name" value="GidB"/>
    <property type="match status" value="1"/>
</dbReference>
<dbReference type="PIRSF" id="PIRSF003078">
    <property type="entry name" value="GidB"/>
    <property type="match status" value="1"/>
</dbReference>
<dbReference type="SUPFAM" id="SSF53335">
    <property type="entry name" value="S-adenosyl-L-methionine-dependent methyltransferases"/>
    <property type="match status" value="1"/>
</dbReference>
<feature type="chain" id="PRO_1000010168" description="Ribosomal RNA small subunit methyltransferase G">
    <location>
        <begin position="1"/>
        <end position="214"/>
    </location>
</feature>
<feature type="binding site" evidence="1">
    <location>
        <position position="78"/>
    </location>
    <ligand>
        <name>S-adenosyl-L-methionine</name>
        <dbReference type="ChEBI" id="CHEBI:59789"/>
    </ligand>
</feature>
<feature type="binding site" evidence="1">
    <location>
        <position position="83"/>
    </location>
    <ligand>
        <name>S-adenosyl-L-methionine</name>
        <dbReference type="ChEBI" id="CHEBI:59789"/>
    </ligand>
</feature>
<feature type="binding site" evidence="1">
    <location>
        <begin position="129"/>
        <end position="130"/>
    </location>
    <ligand>
        <name>S-adenosyl-L-methionine</name>
        <dbReference type="ChEBI" id="CHEBI:59789"/>
    </ligand>
</feature>
<feature type="binding site" evidence="1">
    <location>
        <position position="144"/>
    </location>
    <ligand>
        <name>S-adenosyl-L-methionine</name>
        <dbReference type="ChEBI" id="CHEBI:59789"/>
    </ligand>
</feature>
<organism>
    <name type="scientific">Marinobacter nauticus (strain ATCC 700491 / DSM 11845 / VT8)</name>
    <name type="common">Marinobacter aquaeolei</name>
    <dbReference type="NCBI Taxonomy" id="351348"/>
    <lineage>
        <taxon>Bacteria</taxon>
        <taxon>Pseudomonadati</taxon>
        <taxon>Pseudomonadota</taxon>
        <taxon>Gammaproteobacteria</taxon>
        <taxon>Pseudomonadales</taxon>
        <taxon>Marinobacteraceae</taxon>
        <taxon>Marinobacter</taxon>
    </lineage>
</organism>
<keyword id="KW-0963">Cytoplasm</keyword>
<keyword id="KW-0489">Methyltransferase</keyword>
<keyword id="KW-0698">rRNA processing</keyword>
<keyword id="KW-0949">S-adenosyl-L-methionine</keyword>
<keyword id="KW-0808">Transferase</keyword>
<proteinExistence type="inferred from homology"/>
<comment type="function">
    <text evidence="1">Specifically methylates the N7 position of guanine in position 527 of 16S rRNA.</text>
</comment>
<comment type="catalytic activity">
    <reaction evidence="1">
        <text>guanosine(527) in 16S rRNA + S-adenosyl-L-methionine = N(7)-methylguanosine(527) in 16S rRNA + S-adenosyl-L-homocysteine</text>
        <dbReference type="Rhea" id="RHEA:42732"/>
        <dbReference type="Rhea" id="RHEA-COMP:10209"/>
        <dbReference type="Rhea" id="RHEA-COMP:10210"/>
        <dbReference type="ChEBI" id="CHEBI:57856"/>
        <dbReference type="ChEBI" id="CHEBI:59789"/>
        <dbReference type="ChEBI" id="CHEBI:74269"/>
        <dbReference type="ChEBI" id="CHEBI:74480"/>
        <dbReference type="EC" id="2.1.1.170"/>
    </reaction>
</comment>
<comment type="subcellular location">
    <subcellularLocation>
        <location evidence="1">Cytoplasm</location>
    </subcellularLocation>
</comment>
<comment type="similarity">
    <text evidence="1">Belongs to the methyltransferase superfamily. RNA methyltransferase RsmG family.</text>
</comment>
<reference key="1">
    <citation type="journal article" date="2011" name="Appl. Environ. Microbiol.">
        <title>Genomic potential of Marinobacter aquaeolei, a biogeochemical 'opportunitroph'.</title>
        <authorList>
            <person name="Singer E."/>
            <person name="Webb E.A."/>
            <person name="Nelson W.C."/>
            <person name="Heidelberg J.F."/>
            <person name="Ivanova N."/>
            <person name="Pati A."/>
            <person name="Edwards K.J."/>
        </authorList>
    </citation>
    <scope>NUCLEOTIDE SEQUENCE [LARGE SCALE GENOMIC DNA]</scope>
    <source>
        <strain>ATCC 700491 / DSM 11845 / VT8</strain>
    </source>
</reference>
<protein>
    <recommendedName>
        <fullName evidence="1">Ribosomal RNA small subunit methyltransferase G</fullName>
        <ecNumber evidence="1">2.1.1.170</ecNumber>
    </recommendedName>
    <alternativeName>
        <fullName evidence="1">16S rRNA 7-methylguanosine methyltransferase</fullName>
        <shortName evidence="1">16S rRNA m7G methyltransferase</shortName>
    </alternativeName>
</protein>
<sequence>MSYPQWPGQLRDGLAAMNLSLSDSQQQQLLAFLALLNKWNKAYNLTAVRDERVMVSRQLLDSLSILPWVTTDHLLDVGAGGGLPGIPLAIVVPEKRFTLLDSNGKKTRFLNQCVLELGLDNVEVIHGRAEDCQPDQPFTQISSRAFTALENLVTWCGGLLANDGEFLAMKGQYPDDEVAALPAGWQVESSHSLTVPGADGERHLLIVARAERHR</sequence>
<name>RSMG_MARN8</name>